<name>RL25_WOLTR</name>
<proteinExistence type="inferred from homology"/>
<evidence type="ECO:0000255" key="1">
    <source>
        <dbReference type="HAMAP-Rule" id="MF_01334"/>
    </source>
</evidence>
<evidence type="ECO:0000305" key="2"/>
<accession>Q5GTJ0</accession>
<protein>
    <recommendedName>
        <fullName evidence="1">Large ribosomal subunit protein bL25</fullName>
    </recommendedName>
    <alternativeName>
        <fullName evidence="2">50S ribosomal protein L25</fullName>
    </alternativeName>
    <alternativeName>
        <fullName evidence="1">General stress protein CTC</fullName>
    </alternativeName>
</protein>
<reference key="1">
    <citation type="journal article" date="2005" name="PLoS Biol.">
        <title>The Wolbachia genome of Brugia malayi: endosymbiont evolution within a human pathogenic nematode.</title>
        <authorList>
            <person name="Foster J."/>
            <person name="Ganatra M."/>
            <person name="Kamal I."/>
            <person name="Ware J."/>
            <person name="Makarova K."/>
            <person name="Ivanova N."/>
            <person name="Bhattacharyya A."/>
            <person name="Kapatral V."/>
            <person name="Kumar S."/>
            <person name="Posfai J."/>
            <person name="Vincze T."/>
            <person name="Ingram J."/>
            <person name="Moran L."/>
            <person name="Lapidus A."/>
            <person name="Omelchenko M."/>
            <person name="Kyrpides N."/>
            <person name="Ghedin E."/>
            <person name="Wang S."/>
            <person name="Goltsman E."/>
            <person name="Joukov V."/>
            <person name="Ostrovskaya O."/>
            <person name="Tsukerman K."/>
            <person name="Mazur M."/>
            <person name="Comb D."/>
            <person name="Koonin E."/>
            <person name="Slatko B."/>
        </authorList>
    </citation>
    <scope>NUCLEOTIDE SEQUENCE [LARGE SCALE GENOMIC DNA]</scope>
    <source>
        <strain>TRS</strain>
    </source>
</reference>
<dbReference type="EMBL" id="AE017321">
    <property type="protein sequence ID" value="AAW70684.1"/>
    <property type="molecule type" value="Genomic_DNA"/>
</dbReference>
<dbReference type="RefSeq" id="WP_011256294.1">
    <property type="nucleotide sequence ID" value="NC_006833.1"/>
</dbReference>
<dbReference type="SMR" id="Q5GTJ0"/>
<dbReference type="STRING" id="292805.Wbm0092"/>
<dbReference type="KEGG" id="wbm:Wbm0092"/>
<dbReference type="eggNOG" id="COG1825">
    <property type="taxonomic scope" value="Bacteria"/>
</dbReference>
<dbReference type="HOGENOM" id="CLU_075939_0_0_5"/>
<dbReference type="Proteomes" id="UP000000534">
    <property type="component" value="Chromosome"/>
</dbReference>
<dbReference type="GO" id="GO:0022625">
    <property type="term" value="C:cytosolic large ribosomal subunit"/>
    <property type="evidence" value="ECO:0007669"/>
    <property type="project" value="TreeGrafter"/>
</dbReference>
<dbReference type="GO" id="GO:0008097">
    <property type="term" value="F:5S rRNA binding"/>
    <property type="evidence" value="ECO:0007669"/>
    <property type="project" value="InterPro"/>
</dbReference>
<dbReference type="GO" id="GO:0003735">
    <property type="term" value="F:structural constituent of ribosome"/>
    <property type="evidence" value="ECO:0007669"/>
    <property type="project" value="InterPro"/>
</dbReference>
<dbReference type="GO" id="GO:0006412">
    <property type="term" value="P:translation"/>
    <property type="evidence" value="ECO:0007669"/>
    <property type="project" value="UniProtKB-UniRule"/>
</dbReference>
<dbReference type="CDD" id="cd00495">
    <property type="entry name" value="Ribosomal_L25_TL5_CTC"/>
    <property type="match status" value="1"/>
</dbReference>
<dbReference type="Gene3D" id="2.170.120.20">
    <property type="entry name" value="Ribosomal protein L25, beta domain"/>
    <property type="match status" value="1"/>
</dbReference>
<dbReference type="Gene3D" id="2.40.240.10">
    <property type="entry name" value="Ribosomal Protein L25, Chain P"/>
    <property type="match status" value="1"/>
</dbReference>
<dbReference type="HAMAP" id="MF_01334">
    <property type="entry name" value="Ribosomal_bL25_CTC"/>
    <property type="match status" value="1"/>
</dbReference>
<dbReference type="InterPro" id="IPR020056">
    <property type="entry name" value="Rbsml_bL25/Gln-tRNA_synth_N"/>
</dbReference>
<dbReference type="InterPro" id="IPR011035">
    <property type="entry name" value="Ribosomal_bL25/Gln-tRNA_synth"/>
</dbReference>
<dbReference type="InterPro" id="IPR020057">
    <property type="entry name" value="Ribosomal_bL25_b-dom"/>
</dbReference>
<dbReference type="InterPro" id="IPR037121">
    <property type="entry name" value="Ribosomal_bL25_C"/>
</dbReference>
<dbReference type="InterPro" id="IPR001021">
    <property type="entry name" value="Ribosomal_bL25_long"/>
</dbReference>
<dbReference type="InterPro" id="IPR029751">
    <property type="entry name" value="Ribosomal_L25_dom"/>
</dbReference>
<dbReference type="InterPro" id="IPR020930">
    <property type="entry name" value="Ribosomal_uL5_bac-type"/>
</dbReference>
<dbReference type="NCBIfam" id="TIGR00731">
    <property type="entry name" value="bL25_bact_ctc"/>
    <property type="match status" value="1"/>
</dbReference>
<dbReference type="NCBIfam" id="NF004128">
    <property type="entry name" value="PRK05618.1-2"/>
    <property type="match status" value="1"/>
</dbReference>
<dbReference type="NCBIfam" id="NF004138">
    <property type="entry name" value="PRK05618.4-1"/>
    <property type="match status" value="1"/>
</dbReference>
<dbReference type="NCBIfam" id="NF004612">
    <property type="entry name" value="PRK05943.1"/>
    <property type="match status" value="1"/>
</dbReference>
<dbReference type="PANTHER" id="PTHR33284">
    <property type="entry name" value="RIBOSOMAL PROTEIN L25/GLN-TRNA SYNTHETASE, ANTI-CODON-BINDING DOMAIN-CONTAINING PROTEIN"/>
    <property type="match status" value="1"/>
</dbReference>
<dbReference type="PANTHER" id="PTHR33284:SF1">
    <property type="entry name" value="RIBOSOMAL PROTEIN L25_GLN-TRNA SYNTHETASE, ANTI-CODON-BINDING DOMAIN-CONTAINING PROTEIN"/>
    <property type="match status" value="1"/>
</dbReference>
<dbReference type="Pfam" id="PF01386">
    <property type="entry name" value="Ribosomal_L25p"/>
    <property type="match status" value="1"/>
</dbReference>
<dbReference type="Pfam" id="PF14693">
    <property type="entry name" value="Ribosomal_TL5_C"/>
    <property type="match status" value="1"/>
</dbReference>
<dbReference type="SUPFAM" id="SSF50715">
    <property type="entry name" value="Ribosomal protein L25-like"/>
    <property type="match status" value="1"/>
</dbReference>
<sequence length="204" mass="22427">MTQQEMITINAELRDVTKTKAIRSLRKKGNIPAVVYGKGHNNVNLTLSAKEFTKQYKLGFLSAHVIELDISGKKEYALVRDIQWHVVKDTIQHVDFQFVDKGSEIKIDIPLSFVNESKSPGIKLGGVLNVLCRSITVKCSPDKIPQAIEVDLSGKMIGQSVHISDVKLPGGVKLAAHEEENFTVVTISAADSGVEESQVETTEE</sequence>
<organism>
    <name type="scientific">Wolbachia sp. subsp. Brugia malayi (strain TRS)</name>
    <dbReference type="NCBI Taxonomy" id="292805"/>
    <lineage>
        <taxon>Bacteria</taxon>
        <taxon>Pseudomonadati</taxon>
        <taxon>Pseudomonadota</taxon>
        <taxon>Alphaproteobacteria</taxon>
        <taxon>Rickettsiales</taxon>
        <taxon>Anaplasmataceae</taxon>
        <taxon>Wolbachieae</taxon>
        <taxon>Wolbachia</taxon>
    </lineage>
</organism>
<keyword id="KW-1185">Reference proteome</keyword>
<keyword id="KW-0687">Ribonucleoprotein</keyword>
<keyword id="KW-0689">Ribosomal protein</keyword>
<keyword id="KW-0694">RNA-binding</keyword>
<keyword id="KW-0699">rRNA-binding</keyword>
<gene>
    <name evidence="1" type="primary">rplY</name>
    <name evidence="1" type="synonym">ctc</name>
    <name type="ordered locus">Wbm0092</name>
</gene>
<feature type="chain" id="PRO_0000181617" description="Large ribosomal subunit protein bL25">
    <location>
        <begin position="1"/>
        <end position="204"/>
    </location>
</feature>
<comment type="function">
    <text evidence="1">This is one of the proteins that binds to the 5S RNA in the ribosome where it forms part of the central protuberance.</text>
</comment>
<comment type="subunit">
    <text evidence="1">Part of the 50S ribosomal subunit; part of the 5S rRNA/L5/L18/L25 subcomplex. Contacts the 5S rRNA. Binds to the 5S rRNA independently of L5 and L18.</text>
</comment>
<comment type="similarity">
    <text evidence="1">Belongs to the bacterial ribosomal protein bL25 family. CTC subfamily.</text>
</comment>